<gene>
    <name evidence="1" type="primary">ldh</name>
    <name type="ordered locus">CLI_1599</name>
</gene>
<protein>
    <recommendedName>
        <fullName evidence="1">L-lactate dehydrogenase</fullName>
        <shortName evidence="1">L-LDH</shortName>
        <ecNumber evidence="1">1.1.1.27</ecNumber>
    </recommendedName>
</protein>
<feature type="chain" id="PRO_1000026500" description="L-lactate dehydrogenase">
    <location>
        <begin position="1"/>
        <end position="318"/>
    </location>
</feature>
<feature type="active site" description="Proton acceptor" evidence="1">
    <location>
        <position position="179"/>
    </location>
</feature>
<feature type="binding site" evidence="1">
    <location>
        <position position="18"/>
    </location>
    <ligand>
        <name>NAD(+)</name>
        <dbReference type="ChEBI" id="CHEBI:57540"/>
    </ligand>
</feature>
<feature type="binding site" evidence="1">
    <location>
        <position position="39"/>
    </location>
    <ligand>
        <name>NAD(+)</name>
        <dbReference type="ChEBI" id="CHEBI:57540"/>
    </ligand>
</feature>
<feature type="binding site" evidence="1">
    <location>
        <position position="44"/>
    </location>
    <ligand>
        <name>NAD(+)</name>
        <dbReference type="ChEBI" id="CHEBI:57540"/>
    </ligand>
</feature>
<feature type="binding site" evidence="1">
    <location>
        <position position="69"/>
    </location>
    <ligand>
        <name>NAD(+)</name>
        <dbReference type="ChEBI" id="CHEBI:57540"/>
    </ligand>
</feature>
<feature type="binding site" evidence="1">
    <location>
        <begin position="83"/>
        <end position="84"/>
    </location>
    <ligand>
        <name>NAD(+)</name>
        <dbReference type="ChEBI" id="CHEBI:57540"/>
    </ligand>
</feature>
<feature type="binding site" evidence="1">
    <location>
        <position position="86"/>
    </location>
    <ligand>
        <name>substrate</name>
    </ligand>
</feature>
<feature type="binding site" evidence="1">
    <location>
        <position position="92"/>
    </location>
    <ligand>
        <name>substrate</name>
    </ligand>
</feature>
<feature type="binding site" evidence="1">
    <location>
        <position position="105"/>
    </location>
    <ligand>
        <name>NAD(+)</name>
        <dbReference type="ChEBI" id="CHEBI:57540"/>
    </ligand>
</feature>
<feature type="binding site" evidence="1">
    <location>
        <begin position="122"/>
        <end position="124"/>
    </location>
    <ligand>
        <name>NAD(+)</name>
        <dbReference type="ChEBI" id="CHEBI:57540"/>
    </ligand>
</feature>
<feature type="binding site" evidence="1">
    <location>
        <begin position="124"/>
        <end position="127"/>
    </location>
    <ligand>
        <name>substrate</name>
    </ligand>
</feature>
<feature type="binding site" evidence="1">
    <location>
        <position position="147"/>
    </location>
    <ligand>
        <name>NAD(+)</name>
        <dbReference type="ChEBI" id="CHEBI:57540"/>
    </ligand>
</feature>
<feature type="binding site" evidence="1">
    <location>
        <begin position="152"/>
        <end position="155"/>
    </location>
    <ligand>
        <name>substrate</name>
    </ligand>
</feature>
<feature type="binding site" evidence="1">
    <location>
        <position position="234"/>
    </location>
    <ligand>
        <name>substrate</name>
    </ligand>
</feature>
<feature type="modified residue" description="Phosphotyrosine" evidence="1">
    <location>
        <position position="225"/>
    </location>
</feature>
<evidence type="ECO:0000255" key="1">
    <source>
        <dbReference type="HAMAP-Rule" id="MF_00488"/>
    </source>
</evidence>
<accession>A7GDK3</accession>
<reference key="1">
    <citation type="submission" date="2007-06" db="EMBL/GenBank/DDBJ databases">
        <authorList>
            <person name="Brinkac L.M."/>
            <person name="Daugherty S."/>
            <person name="Dodson R.J."/>
            <person name="Madupu R."/>
            <person name="Brown J.L."/>
            <person name="Bruce D."/>
            <person name="Detter C."/>
            <person name="Munk C."/>
            <person name="Smith L.A."/>
            <person name="Smith T.J."/>
            <person name="White O."/>
            <person name="Brettin T.S."/>
        </authorList>
    </citation>
    <scope>NUCLEOTIDE SEQUENCE [LARGE SCALE GENOMIC DNA]</scope>
    <source>
        <strain>Langeland / NCTC 10281 / Type F</strain>
    </source>
</reference>
<sequence length="318" mass="34689">MIKKRNTTKISVIGAGSVGATTAYALMLSGVATEIVLVDVNKSKTEGEAMDLSHGADFVKPVNILSGDYKDTEGSDIVVITAGAAQKVGETRLQLINKNINIFKSIIPEVVKYNKDAILLVVSNPVDVLSYVTYKLSGFPKERVIGSGTVLDTSRLKHEIGKRYKIDPRNVNTYIMGEHGDSEIATWSVTNIQNIKIDEYANKENLEYNDNFRKEVYENVKNAAYEVINRKGATFYAIALAVTRIVKAILGDEKTILPVSTLVENYYGIKDVYLGMPCIVGGSGIEKALSIDLNKTEASKLVKSAETLKNTLNNASGL</sequence>
<keyword id="KW-0963">Cytoplasm</keyword>
<keyword id="KW-0520">NAD</keyword>
<keyword id="KW-0560">Oxidoreductase</keyword>
<keyword id="KW-0597">Phosphoprotein</keyword>
<name>LDH_CLOBL</name>
<proteinExistence type="inferred from homology"/>
<dbReference type="EC" id="1.1.1.27" evidence="1"/>
<dbReference type="EMBL" id="CP000728">
    <property type="protein sequence ID" value="ABS40695.1"/>
    <property type="molecule type" value="Genomic_DNA"/>
</dbReference>
<dbReference type="RefSeq" id="WP_012099630.1">
    <property type="nucleotide sequence ID" value="NC_009699.1"/>
</dbReference>
<dbReference type="SMR" id="A7GDK3"/>
<dbReference type="KEGG" id="cbf:CLI_1599"/>
<dbReference type="HOGENOM" id="CLU_045401_1_1_9"/>
<dbReference type="UniPathway" id="UPA00554">
    <property type="reaction ID" value="UER00611"/>
</dbReference>
<dbReference type="Proteomes" id="UP000002410">
    <property type="component" value="Chromosome"/>
</dbReference>
<dbReference type="GO" id="GO:0005737">
    <property type="term" value="C:cytoplasm"/>
    <property type="evidence" value="ECO:0007669"/>
    <property type="project" value="UniProtKB-SubCell"/>
</dbReference>
<dbReference type="GO" id="GO:0004459">
    <property type="term" value="F:L-lactate dehydrogenase activity"/>
    <property type="evidence" value="ECO:0007669"/>
    <property type="project" value="UniProtKB-UniRule"/>
</dbReference>
<dbReference type="GO" id="GO:0006096">
    <property type="term" value="P:glycolytic process"/>
    <property type="evidence" value="ECO:0007669"/>
    <property type="project" value="UniProtKB-UniRule"/>
</dbReference>
<dbReference type="GO" id="GO:0006089">
    <property type="term" value="P:lactate metabolic process"/>
    <property type="evidence" value="ECO:0007669"/>
    <property type="project" value="TreeGrafter"/>
</dbReference>
<dbReference type="CDD" id="cd05292">
    <property type="entry name" value="LDH_2"/>
    <property type="match status" value="1"/>
</dbReference>
<dbReference type="FunFam" id="3.40.50.720:FF:000018">
    <property type="entry name" value="Malate dehydrogenase"/>
    <property type="match status" value="1"/>
</dbReference>
<dbReference type="Gene3D" id="3.90.110.10">
    <property type="entry name" value="Lactate dehydrogenase/glycoside hydrolase, family 4, C-terminal"/>
    <property type="match status" value="1"/>
</dbReference>
<dbReference type="Gene3D" id="3.40.50.720">
    <property type="entry name" value="NAD(P)-binding Rossmann-like Domain"/>
    <property type="match status" value="1"/>
</dbReference>
<dbReference type="HAMAP" id="MF_00488">
    <property type="entry name" value="Lactate_dehydrog"/>
    <property type="match status" value="1"/>
</dbReference>
<dbReference type="InterPro" id="IPR001557">
    <property type="entry name" value="L-lactate/malate_DH"/>
</dbReference>
<dbReference type="InterPro" id="IPR011304">
    <property type="entry name" value="L-lactate_DH"/>
</dbReference>
<dbReference type="InterPro" id="IPR018177">
    <property type="entry name" value="L-lactate_DH_AS"/>
</dbReference>
<dbReference type="InterPro" id="IPR022383">
    <property type="entry name" value="Lactate/malate_DH_C"/>
</dbReference>
<dbReference type="InterPro" id="IPR001236">
    <property type="entry name" value="Lactate/malate_DH_N"/>
</dbReference>
<dbReference type="InterPro" id="IPR015955">
    <property type="entry name" value="Lactate_DH/Glyco_Ohase_4_C"/>
</dbReference>
<dbReference type="InterPro" id="IPR036291">
    <property type="entry name" value="NAD(P)-bd_dom_sf"/>
</dbReference>
<dbReference type="NCBIfam" id="TIGR01771">
    <property type="entry name" value="L-LDH-NAD"/>
    <property type="match status" value="1"/>
</dbReference>
<dbReference type="NCBIfam" id="NF000824">
    <property type="entry name" value="PRK00066.1"/>
    <property type="match status" value="1"/>
</dbReference>
<dbReference type="NCBIfam" id="NF004863">
    <property type="entry name" value="PRK06223.1"/>
    <property type="match status" value="1"/>
</dbReference>
<dbReference type="PANTHER" id="PTHR43128">
    <property type="entry name" value="L-2-HYDROXYCARBOXYLATE DEHYDROGENASE (NAD(P)(+))"/>
    <property type="match status" value="1"/>
</dbReference>
<dbReference type="PANTHER" id="PTHR43128:SF16">
    <property type="entry name" value="L-LACTATE DEHYDROGENASE"/>
    <property type="match status" value="1"/>
</dbReference>
<dbReference type="Pfam" id="PF02866">
    <property type="entry name" value="Ldh_1_C"/>
    <property type="match status" value="1"/>
</dbReference>
<dbReference type="Pfam" id="PF00056">
    <property type="entry name" value="Ldh_1_N"/>
    <property type="match status" value="1"/>
</dbReference>
<dbReference type="PIRSF" id="PIRSF000102">
    <property type="entry name" value="Lac_mal_DH"/>
    <property type="match status" value="1"/>
</dbReference>
<dbReference type="PRINTS" id="PR00086">
    <property type="entry name" value="LLDHDRGNASE"/>
</dbReference>
<dbReference type="SUPFAM" id="SSF56327">
    <property type="entry name" value="LDH C-terminal domain-like"/>
    <property type="match status" value="1"/>
</dbReference>
<dbReference type="SUPFAM" id="SSF51735">
    <property type="entry name" value="NAD(P)-binding Rossmann-fold domains"/>
    <property type="match status" value="1"/>
</dbReference>
<dbReference type="PROSITE" id="PS00064">
    <property type="entry name" value="L_LDH"/>
    <property type="match status" value="1"/>
</dbReference>
<comment type="function">
    <text evidence="1">Catalyzes the conversion of lactate to pyruvate.</text>
</comment>
<comment type="catalytic activity">
    <reaction evidence="1">
        <text>(S)-lactate + NAD(+) = pyruvate + NADH + H(+)</text>
        <dbReference type="Rhea" id="RHEA:23444"/>
        <dbReference type="ChEBI" id="CHEBI:15361"/>
        <dbReference type="ChEBI" id="CHEBI:15378"/>
        <dbReference type="ChEBI" id="CHEBI:16651"/>
        <dbReference type="ChEBI" id="CHEBI:57540"/>
        <dbReference type="ChEBI" id="CHEBI:57945"/>
        <dbReference type="EC" id="1.1.1.27"/>
    </reaction>
</comment>
<comment type="pathway">
    <text evidence="1">Fermentation; pyruvate fermentation to lactate; (S)-lactate from pyruvate: step 1/1.</text>
</comment>
<comment type="subunit">
    <text evidence="1">Homotetramer.</text>
</comment>
<comment type="subcellular location">
    <subcellularLocation>
        <location evidence="1">Cytoplasm</location>
    </subcellularLocation>
</comment>
<comment type="similarity">
    <text evidence="1">Belongs to the LDH/MDH superfamily. LDH family.</text>
</comment>
<organism>
    <name type="scientific">Clostridium botulinum (strain Langeland / NCTC 10281 / Type F)</name>
    <dbReference type="NCBI Taxonomy" id="441772"/>
    <lineage>
        <taxon>Bacteria</taxon>
        <taxon>Bacillati</taxon>
        <taxon>Bacillota</taxon>
        <taxon>Clostridia</taxon>
        <taxon>Eubacteriales</taxon>
        <taxon>Clostridiaceae</taxon>
        <taxon>Clostridium</taxon>
    </lineage>
</organism>